<sequence length="273" mass="28458">MLLIDVGNSHVVFGIQGENGGRVCVRELFRLAPDARKTQDEYSLLIHALCERAGVGRASLRDAFISSVVPVLTKTVADAVAQISGVQPVVFGPWAYEHLPVRIPEPVRAEIGTDLVANAVAAYVHFRSACVVVDCGTALTFTAVDGTGLIQGVAIAPGLRTAVQSLHTGTAQLPLVPLALPDSVLGKDTTHAVQAGVVRGTLFVIRAMIAQCQKELGCRCAAVITGGLSRLFSSEVDFPPIDAQLTLSGLAHIARLVPTSLLPPATVSGSSGN</sequence>
<evidence type="ECO:0000255" key="1">
    <source>
        <dbReference type="HAMAP-Rule" id="MF_01274"/>
    </source>
</evidence>
<keyword id="KW-0067">ATP-binding</keyword>
<keyword id="KW-0173">Coenzyme A biosynthesis</keyword>
<keyword id="KW-0963">Cytoplasm</keyword>
<keyword id="KW-0418">Kinase</keyword>
<keyword id="KW-0479">Metal-binding</keyword>
<keyword id="KW-0547">Nucleotide-binding</keyword>
<keyword id="KW-0630">Potassium</keyword>
<keyword id="KW-0808">Transferase</keyword>
<feature type="chain" id="PRO_1000140264" description="Type III pantothenate kinase">
    <location>
        <begin position="1"/>
        <end position="273"/>
    </location>
</feature>
<feature type="active site" description="Proton acceptor" evidence="1">
    <location>
        <position position="114"/>
    </location>
</feature>
<feature type="binding site" evidence="1">
    <location>
        <begin position="5"/>
        <end position="12"/>
    </location>
    <ligand>
        <name>ATP</name>
        <dbReference type="ChEBI" id="CHEBI:30616"/>
    </ligand>
</feature>
<feature type="binding site" evidence="1">
    <location>
        <begin position="112"/>
        <end position="115"/>
    </location>
    <ligand>
        <name>substrate</name>
    </ligand>
</feature>
<feature type="binding site" evidence="1">
    <location>
        <position position="134"/>
    </location>
    <ligand>
        <name>K(+)</name>
        <dbReference type="ChEBI" id="CHEBI:29103"/>
    </ligand>
</feature>
<feature type="binding site" evidence="1">
    <location>
        <position position="137"/>
    </location>
    <ligand>
        <name>ATP</name>
        <dbReference type="ChEBI" id="CHEBI:30616"/>
    </ligand>
</feature>
<feature type="binding site" evidence="1">
    <location>
        <position position="189"/>
    </location>
    <ligand>
        <name>substrate</name>
    </ligand>
</feature>
<dbReference type="EC" id="2.7.1.33" evidence="1"/>
<dbReference type="EMBL" id="CP000805">
    <property type="protein sequence ID" value="ACD70857.1"/>
    <property type="molecule type" value="Genomic_DNA"/>
</dbReference>
<dbReference type="RefSeq" id="WP_012460549.1">
    <property type="nucleotide sequence ID" value="NC_021508.1"/>
</dbReference>
<dbReference type="SMR" id="B2S328"/>
<dbReference type="KEGG" id="tpp:TPASS_0431"/>
<dbReference type="PATRIC" id="fig|455434.6.peg.432"/>
<dbReference type="UniPathway" id="UPA00241">
    <property type="reaction ID" value="UER00352"/>
</dbReference>
<dbReference type="Proteomes" id="UP000001202">
    <property type="component" value="Chromosome"/>
</dbReference>
<dbReference type="GO" id="GO:0005737">
    <property type="term" value="C:cytoplasm"/>
    <property type="evidence" value="ECO:0007669"/>
    <property type="project" value="UniProtKB-SubCell"/>
</dbReference>
<dbReference type="GO" id="GO:0005524">
    <property type="term" value="F:ATP binding"/>
    <property type="evidence" value="ECO:0007669"/>
    <property type="project" value="UniProtKB-UniRule"/>
</dbReference>
<dbReference type="GO" id="GO:0046872">
    <property type="term" value="F:metal ion binding"/>
    <property type="evidence" value="ECO:0007669"/>
    <property type="project" value="UniProtKB-KW"/>
</dbReference>
<dbReference type="GO" id="GO:0004594">
    <property type="term" value="F:pantothenate kinase activity"/>
    <property type="evidence" value="ECO:0007669"/>
    <property type="project" value="UniProtKB-UniRule"/>
</dbReference>
<dbReference type="GO" id="GO:0015937">
    <property type="term" value="P:coenzyme A biosynthetic process"/>
    <property type="evidence" value="ECO:0007669"/>
    <property type="project" value="UniProtKB-UniRule"/>
</dbReference>
<dbReference type="CDD" id="cd24015">
    <property type="entry name" value="ASKHA_NBD_PanK-III"/>
    <property type="match status" value="1"/>
</dbReference>
<dbReference type="Gene3D" id="3.30.420.40">
    <property type="match status" value="2"/>
</dbReference>
<dbReference type="HAMAP" id="MF_01274">
    <property type="entry name" value="Pantothen_kinase_3"/>
    <property type="match status" value="1"/>
</dbReference>
<dbReference type="InterPro" id="IPR043129">
    <property type="entry name" value="ATPase_NBD"/>
</dbReference>
<dbReference type="InterPro" id="IPR004619">
    <property type="entry name" value="Type_III_PanK"/>
</dbReference>
<dbReference type="NCBIfam" id="TIGR00671">
    <property type="entry name" value="baf"/>
    <property type="match status" value="1"/>
</dbReference>
<dbReference type="PANTHER" id="PTHR34265">
    <property type="entry name" value="TYPE III PANTOTHENATE KINASE"/>
    <property type="match status" value="1"/>
</dbReference>
<dbReference type="PANTHER" id="PTHR34265:SF1">
    <property type="entry name" value="TYPE III PANTOTHENATE KINASE"/>
    <property type="match status" value="1"/>
</dbReference>
<dbReference type="Pfam" id="PF03309">
    <property type="entry name" value="Pan_kinase"/>
    <property type="match status" value="1"/>
</dbReference>
<dbReference type="SUPFAM" id="SSF53067">
    <property type="entry name" value="Actin-like ATPase domain"/>
    <property type="match status" value="2"/>
</dbReference>
<reference key="1">
    <citation type="journal article" date="2008" name="BMC Microbiol.">
        <title>Complete genome sequence of Treponema pallidum ssp. pallidum strain SS14 determined with oligonucleotide arrays.</title>
        <authorList>
            <person name="Matejkova P."/>
            <person name="Strouhal M."/>
            <person name="Smajs D."/>
            <person name="Norris S.J."/>
            <person name="Palzkill T."/>
            <person name="Petrosino J.F."/>
            <person name="Sodergren E."/>
            <person name="Norton J.E."/>
            <person name="Singh J."/>
            <person name="Richmond T.A."/>
            <person name="Molla M.N."/>
            <person name="Albert T.J."/>
            <person name="Weinstock G.M."/>
        </authorList>
    </citation>
    <scope>NUCLEOTIDE SEQUENCE [LARGE SCALE GENOMIC DNA]</scope>
    <source>
        <strain>SS14</strain>
    </source>
</reference>
<gene>
    <name evidence="1" type="primary">coaX</name>
    <name type="ordered locus">TPASS_0431</name>
</gene>
<accession>B2S328</accession>
<name>COAX_TREPS</name>
<organism>
    <name type="scientific">Treponema pallidum subsp. pallidum (strain SS14)</name>
    <dbReference type="NCBI Taxonomy" id="455434"/>
    <lineage>
        <taxon>Bacteria</taxon>
        <taxon>Pseudomonadati</taxon>
        <taxon>Spirochaetota</taxon>
        <taxon>Spirochaetia</taxon>
        <taxon>Spirochaetales</taxon>
        <taxon>Treponemataceae</taxon>
        <taxon>Treponema</taxon>
    </lineage>
</organism>
<protein>
    <recommendedName>
        <fullName evidence="1">Type III pantothenate kinase</fullName>
        <ecNumber evidence="1">2.7.1.33</ecNumber>
    </recommendedName>
    <alternativeName>
        <fullName evidence="1">PanK-III</fullName>
    </alternativeName>
    <alternativeName>
        <fullName evidence="1">Pantothenic acid kinase</fullName>
    </alternativeName>
</protein>
<comment type="function">
    <text evidence="1">Catalyzes the phosphorylation of pantothenate (Pan), the first step in CoA biosynthesis.</text>
</comment>
<comment type="catalytic activity">
    <reaction evidence="1">
        <text>(R)-pantothenate + ATP = (R)-4'-phosphopantothenate + ADP + H(+)</text>
        <dbReference type="Rhea" id="RHEA:16373"/>
        <dbReference type="ChEBI" id="CHEBI:10986"/>
        <dbReference type="ChEBI" id="CHEBI:15378"/>
        <dbReference type="ChEBI" id="CHEBI:29032"/>
        <dbReference type="ChEBI" id="CHEBI:30616"/>
        <dbReference type="ChEBI" id="CHEBI:456216"/>
        <dbReference type="EC" id="2.7.1.33"/>
    </reaction>
</comment>
<comment type="cofactor">
    <cofactor evidence="1">
        <name>NH4(+)</name>
        <dbReference type="ChEBI" id="CHEBI:28938"/>
    </cofactor>
    <cofactor evidence="1">
        <name>K(+)</name>
        <dbReference type="ChEBI" id="CHEBI:29103"/>
    </cofactor>
    <text evidence="1">A monovalent cation. Ammonium or potassium.</text>
</comment>
<comment type="pathway">
    <text evidence="1">Cofactor biosynthesis; coenzyme A biosynthesis; CoA from (R)-pantothenate: step 1/5.</text>
</comment>
<comment type="subunit">
    <text evidence="1">Homodimer.</text>
</comment>
<comment type="subcellular location">
    <subcellularLocation>
        <location evidence="1">Cytoplasm</location>
    </subcellularLocation>
</comment>
<comment type="similarity">
    <text evidence="1">Belongs to the type III pantothenate kinase family.</text>
</comment>
<proteinExistence type="inferred from homology"/>